<protein>
    <recommendedName>
        <fullName evidence="1">2,3-bisphosphoglycerate-dependent phosphoglycerate mutase</fullName>
        <shortName evidence="1">BPG-dependent PGAM</shortName>
        <shortName evidence="1">PGAM</shortName>
        <shortName evidence="1">Phosphoglyceromutase</shortName>
        <shortName evidence="1">dPGM</shortName>
        <ecNumber evidence="1">5.4.2.11</ecNumber>
    </recommendedName>
</protein>
<reference key="1">
    <citation type="journal article" date="2001" name="Proc. Natl. Acad. Sci. U.S.A.">
        <title>Complete genomic sequence of Pasteurella multocida Pm70.</title>
        <authorList>
            <person name="May B.J."/>
            <person name="Zhang Q."/>
            <person name="Li L.L."/>
            <person name="Paustian M.L."/>
            <person name="Whittam T.S."/>
            <person name="Kapur V."/>
        </authorList>
    </citation>
    <scope>NUCLEOTIDE SEQUENCE [LARGE SCALE GENOMIC DNA]</scope>
    <source>
        <strain>Pm70</strain>
    </source>
</reference>
<accession>Q9CKU9</accession>
<feature type="chain" id="PRO_0000179900" description="2,3-bisphosphoglycerate-dependent phosphoglycerate mutase">
    <location>
        <begin position="1"/>
        <end position="227"/>
    </location>
</feature>
<feature type="active site" description="Tele-phosphohistidine intermediate" evidence="1">
    <location>
        <position position="8"/>
    </location>
</feature>
<feature type="active site" description="Proton donor/acceptor" evidence="1">
    <location>
        <position position="86"/>
    </location>
</feature>
<feature type="binding site" evidence="1">
    <location>
        <begin position="7"/>
        <end position="14"/>
    </location>
    <ligand>
        <name>substrate</name>
    </ligand>
</feature>
<feature type="binding site" evidence="1">
    <location>
        <begin position="20"/>
        <end position="21"/>
    </location>
    <ligand>
        <name>substrate</name>
    </ligand>
</feature>
<feature type="binding site" evidence="1">
    <location>
        <position position="59"/>
    </location>
    <ligand>
        <name>substrate</name>
    </ligand>
</feature>
<feature type="binding site" evidence="1">
    <location>
        <begin position="86"/>
        <end position="89"/>
    </location>
    <ligand>
        <name>substrate</name>
    </ligand>
</feature>
<feature type="binding site" evidence="1">
    <location>
        <position position="97"/>
    </location>
    <ligand>
        <name>substrate</name>
    </ligand>
</feature>
<feature type="binding site" evidence="1">
    <location>
        <begin position="113"/>
        <end position="114"/>
    </location>
    <ligand>
        <name>substrate</name>
    </ligand>
</feature>
<feature type="binding site" evidence="1">
    <location>
        <begin position="182"/>
        <end position="183"/>
    </location>
    <ligand>
        <name>substrate</name>
    </ligand>
</feature>
<feature type="site" description="Transition state stabilizer" evidence="1">
    <location>
        <position position="181"/>
    </location>
</feature>
<keyword id="KW-0312">Gluconeogenesis</keyword>
<keyword id="KW-0324">Glycolysis</keyword>
<keyword id="KW-0413">Isomerase</keyword>
<keyword id="KW-1185">Reference proteome</keyword>
<gene>
    <name evidence="1" type="primary">gpmA</name>
    <name type="ordered locus">PM1506</name>
</gene>
<dbReference type="EC" id="5.4.2.11" evidence="1"/>
<dbReference type="EMBL" id="AE004439">
    <property type="protein sequence ID" value="AAK03590.1"/>
    <property type="molecule type" value="Genomic_DNA"/>
</dbReference>
<dbReference type="RefSeq" id="WP_005718066.1">
    <property type="nucleotide sequence ID" value="NC_002663.1"/>
</dbReference>
<dbReference type="SMR" id="Q9CKU9"/>
<dbReference type="STRING" id="272843.PM1506"/>
<dbReference type="EnsemblBacteria" id="AAK03590">
    <property type="protein sequence ID" value="AAK03590"/>
    <property type="gene ID" value="PM1506"/>
</dbReference>
<dbReference type="KEGG" id="pmu:PM1506"/>
<dbReference type="HOGENOM" id="CLU_033323_1_5_6"/>
<dbReference type="OrthoDB" id="9781415at2"/>
<dbReference type="UniPathway" id="UPA00109">
    <property type="reaction ID" value="UER00186"/>
</dbReference>
<dbReference type="Proteomes" id="UP000000809">
    <property type="component" value="Chromosome"/>
</dbReference>
<dbReference type="GO" id="GO:0004619">
    <property type="term" value="F:phosphoglycerate mutase activity"/>
    <property type="evidence" value="ECO:0007669"/>
    <property type="project" value="UniProtKB-EC"/>
</dbReference>
<dbReference type="GO" id="GO:0006094">
    <property type="term" value="P:gluconeogenesis"/>
    <property type="evidence" value="ECO:0007669"/>
    <property type="project" value="UniProtKB-UniRule"/>
</dbReference>
<dbReference type="GO" id="GO:0006096">
    <property type="term" value="P:glycolytic process"/>
    <property type="evidence" value="ECO:0007669"/>
    <property type="project" value="UniProtKB-UniRule"/>
</dbReference>
<dbReference type="CDD" id="cd07067">
    <property type="entry name" value="HP_PGM_like"/>
    <property type="match status" value="1"/>
</dbReference>
<dbReference type="FunFam" id="3.40.50.1240:FF:000003">
    <property type="entry name" value="2,3-bisphosphoglycerate-dependent phosphoglycerate mutase"/>
    <property type="match status" value="1"/>
</dbReference>
<dbReference type="Gene3D" id="3.40.50.1240">
    <property type="entry name" value="Phosphoglycerate mutase-like"/>
    <property type="match status" value="1"/>
</dbReference>
<dbReference type="HAMAP" id="MF_01039">
    <property type="entry name" value="PGAM_GpmA"/>
    <property type="match status" value="1"/>
</dbReference>
<dbReference type="InterPro" id="IPR013078">
    <property type="entry name" value="His_Pase_superF_clade-1"/>
</dbReference>
<dbReference type="InterPro" id="IPR029033">
    <property type="entry name" value="His_PPase_superfam"/>
</dbReference>
<dbReference type="InterPro" id="IPR005952">
    <property type="entry name" value="Phosphogly_mut1"/>
</dbReference>
<dbReference type="NCBIfam" id="TIGR01258">
    <property type="entry name" value="pgm_1"/>
    <property type="match status" value="1"/>
</dbReference>
<dbReference type="NCBIfam" id="NF010713">
    <property type="entry name" value="PRK14115.1"/>
    <property type="match status" value="1"/>
</dbReference>
<dbReference type="NCBIfam" id="NF010716">
    <property type="entry name" value="PRK14118.1"/>
    <property type="match status" value="1"/>
</dbReference>
<dbReference type="PANTHER" id="PTHR11931">
    <property type="entry name" value="PHOSPHOGLYCERATE MUTASE"/>
    <property type="match status" value="1"/>
</dbReference>
<dbReference type="Pfam" id="PF00300">
    <property type="entry name" value="His_Phos_1"/>
    <property type="match status" value="2"/>
</dbReference>
<dbReference type="PIRSF" id="PIRSF000709">
    <property type="entry name" value="6PFK_2-Ptase"/>
    <property type="match status" value="1"/>
</dbReference>
<dbReference type="SMART" id="SM00855">
    <property type="entry name" value="PGAM"/>
    <property type="match status" value="1"/>
</dbReference>
<dbReference type="SUPFAM" id="SSF53254">
    <property type="entry name" value="Phosphoglycerate mutase-like"/>
    <property type="match status" value="1"/>
</dbReference>
<name>GPMA_PASMU</name>
<comment type="function">
    <text evidence="1">Catalyzes the interconversion of 2-phosphoglycerate and 3-phosphoglycerate.</text>
</comment>
<comment type="catalytic activity">
    <reaction evidence="1">
        <text>(2R)-2-phosphoglycerate = (2R)-3-phosphoglycerate</text>
        <dbReference type="Rhea" id="RHEA:15901"/>
        <dbReference type="ChEBI" id="CHEBI:58272"/>
        <dbReference type="ChEBI" id="CHEBI:58289"/>
        <dbReference type="EC" id="5.4.2.11"/>
    </reaction>
</comment>
<comment type="pathway">
    <text evidence="1">Carbohydrate degradation; glycolysis; pyruvate from D-glyceraldehyde 3-phosphate: step 3/5.</text>
</comment>
<comment type="subunit">
    <text evidence="1">Homodimer.</text>
</comment>
<comment type="similarity">
    <text evidence="1">Belongs to the phosphoglycerate mutase family. BPG-dependent PGAM subfamily.</text>
</comment>
<evidence type="ECO:0000255" key="1">
    <source>
        <dbReference type="HAMAP-Rule" id="MF_01039"/>
    </source>
</evidence>
<proteinExistence type="inferred from homology"/>
<organism>
    <name type="scientific">Pasteurella multocida (strain Pm70)</name>
    <dbReference type="NCBI Taxonomy" id="272843"/>
    <lineage>
        <taxon>Bacteria</taxon>
        <taxon>Pseudomonadati</taxon>
        <taxon>Pseudomonadota</taxon>
        <taxon>Gammaproteobacteria</taxon>
        <taxon>Pasteurellales</taxon>
        <taxon>Pasteurellaceae</taxon>
        <taxon>Pasteurella</taxon>
    </lineage>
</organism>
<sequence length="227" mass="25954">MELVFIRHGFSEWNAKNLFTGWRDVNLTERGIEEAKSAGKKLLEAGFEFDIAFTSVLTRAIKTCNIVLEESNQLWIPQVKNWRLNERHYGALQGLDKKATAEQYGDEQVHIWRRSYDISPPDLDPQDPHSAHNDRRYAHLPSDVVPDAENLKITLERVLPFWEDQIAPALLAGKRVLVTAHGNSLRALAKHIEGISDADIMDLEIPTGQPLVYKLDDNLKVVEKYYL</sequence>